<organism>
    <name type="scientific">Macaca fascicularis</name>
    <name type="common">Crab-eating macaque</name>
    <name type="synonym">Cynomolgus monkey</name>
    <dbReference type="NCBI Taxonomy" id="9541"/>
    <lineage>
        <taxon>Eukaryota</taxon>
        <taxon>Metazoa</taxon>
        <taxon>Chordata</taxon>
        <taxon>Craniata</taxon>
        <taxon>Vertebrata</taxon>
        <taxon>Euteleostomi</taxon>
        <taxon>Mammalia</taxon>
        <taxon>Eutheria</taxon>
        <taxon>Euarchontoglires</taxon>
        <taxon>Primates</taxon>
        <taxon>Haplorrhini</taxon>
        <taxon>Catarrhini</taxon>
        <taxon>Cercopithecidae</taxon>
        <taxon>Cercopithecinae</taxon>
        <taxon>Macaca</taxon>
    </lineage>
</organism>
<evidence type="ECO:0000250" key="1"/>
<evidence type="ECO:0000250" key="2">
    <source>
        <dbReference type="UniProtKB" id="Q8WYB5"/>
    </source>
</evidence>
<evidence type="ECO:0000250" key="3">
    <source>
        <dbReference type="UniProtKB" id="Q92794"/>
    </source>
</evidence>
<evidence type="ECO:0000250" key="4">
    <source>
        <dbReference type="UniProtKB" id="Q9H7Z6"/>
    </source>
</evidence>
<evidence type="ECO:0000255" key="5">
    <source>
        <dbReference type="PROSITE-ProRule" id="PRU00146"/>
    </source>
</evidence>
<evidence type="ECO:0000255" key="6">
    <source>
        <dbReference type="PROSITE-ProRule" id="PRU00837"/>
    </source>
</evidence>
<evidence type="ECO:0000255" key="7">
    <source>
        <dbReference type="PROSITE-ProRule" id="PRU01063"/>
    </source>
</evidence>
<evidence type="ECO:0000255" key="8">
    <source>
        <dbReference type="PROSITE-ProRule" id="PRU01358"/>
    </source>
</evidence>
<evidence type="ECO:0000256" key="9">
    <source>
        <dbReference type="SAM" id="MobiDB-lite"/>
    </source>
</evidence>
<evidence type="ECO:0000305" key="10"/>
<feature type="chain" id="PRO_0000051576" description="Histone acetyltransferase KAT6B">
    <location>
        <begin position="1"/>
        <end position="1784"/>
    </location>
</feature>
<feature type="domain" description="SAMD1-like winged helix (WH)" evidence="8">
    <location>
        <begin position="1"/>
        <end position="77"/>
    </location>
</feature>
<feature type="domain" description="H15" evidence="6">
    <location>
        <begin position="103"/>
        <end position="176"/>
    </location>
</feature>
<feature type="domain" description="MYST-type HAT" evidence="7">
    <location>
        <begin position="423"/>
        <end position="697"/>
    </location>
</feature>
<feature type="zinc finger region" description="PHD-type 1" evidence="5">
    <location>
        <begin position="213"/>
        <end position="272"/>
    </location>
</feature>
<feature type="zinc finger region" description="PHD-type 2" evidence="5">
    <location>
        <begin position="269"/>
        <end position="320"/>
    </location>
</feature>
<feature type="zinc finger region" description="C2HC MYST-type" evidence="7">
    <location>
        <begin position="456"/>
        <end position="481"/>
    </location>
</feature>
<feature type="region of interest" description="Disordered" evidence="9">
    <location>
        <begin position="72"/>
        <end position="98"/>
    </location>
</feature>
<feature type="region of interest" description="Negatively regulates HAT activity" evidence="1">
    <location>
        <begin position="361"/>
        <end position="425"/>
    </location>
</feature>
<feature type="region of interest" description="Catalytic" evidence="1">
    <location>
        <begin position="426"/>
        <end position="716"/>
    </location>
</feature>
<feature type="region of interest" description="Interaction with BRPF1" evidence="1">
    <location>
        <begin position="460"/>
        <end position="716"/>
    </location>
</feature>
<feature type="region of interest" description="Disordered" evidence="9">
    <location>
        <begin position="730"/>
        <end position="884"/>
    </location>
</feature>
<feature type="region of interest" description="Disordered" evidence="9">
    <location>
        <begin position="904"/>
        <end position="1163"/>
    </location>
</feature>
<feature type="region of interest" description="Disordered" evidence="9">
    <location>
        <begin position="1195"/>
        <end position="1273"/>
    </location>
</feature>
<feature type="region of interest" description="Interaction with RUNX1 and RUNX2" evidence="1">
    <location>
        <begin position="1271"/>
        <end position="1784"/>
    </location>
</feature>
<feature type="region of interest" description="Disordered" evidence="9">
    <location>
        <begin position="1291"/>
        <end position="1330"/>
    </location>
</feature>
<feature type="compositionally biased region" description="Polar residues" evidence="9">
    <location>
        <begin position="733"/>
        <end position="751"/>
    </location>
</feature>
<feature type="compositionally biased region" description="Acidic residues" evidence="9">
    <location>
        <begin position="777"/>
        <end position="819"/>
    </location>
</feature>
<feature type="compositionally biased region" description="Polar residues" evidence="9">
    <location>
        <begin position="820"/>
        <end position="831"/>
    </location>
</feature>
<feature type="compositionally biased region" description="Basic residues" evidence="9">
    <location>
        <begin position="835"/>
        <end position="854"/>
    </location>
</feature>
<feature type="compositionally biased region" description="Low complexity" evidence="9">
    <location>
        <begin position="856"/>
        <end position="869"/>
    </location>
</feature>
<feature type="compositionally biased region" description="Basic residues" evidence="9">
    <location>
        <begin position="904"/>
        <end position="914"/>
    </location>
</feature>
<feature type="compositionally biased region" description="Basic and acidic residues" evidence="9">
    <location>
        <begin position="938"/>
        <end position="957"/>
    </location>
</feature>
<feature type="compositionally biased region" description="Basic and acidic residues" evidence="9">
    <location>
        <begin position="1055"/>
        <end position="1064"/>
    </location>
</feature>
<feature type="compositionally biased region" description="Acidic residues" evidence="9">
    <location>
        <begin position="1065"/>
        <end position="1087"/>
    </location>
</feature>
<feature type="compositionally biased region" description="Basic and acidic residues" evidence="9">
    <location>
        <begin position="1088"/>
        <end position="1101"/>
    </location>
</feature>
<feature type="compositionally biased region" description="Basic and acidic residues" evidence="9">
    <location>
        <begin position="1107"/>
        <end position="1118"/>
    </location>
</feature>
<feature type="compositionally biased region" description="Acidic residues" evidence="9">
    <location>
        <begin position="1119"/>
        <end position="1128"/>
    </location>
</feature>
<feature type="compositionally biased region" description="Basic and acidic residues" evidence="9">
    <location>
        <begin position="1144"/>
        <end position="1163"/>
    </location>
</feature>
<feature type="compositionally biased region" description="Acidic residues" evidence="9">
    <location>
        <begin position="1209"/>
        <end position="1218"/>
    </location>
</feature>
<feature type="compositionally biased region" description="Basic and acidic residues" evidence="9">
    <location>
        <begin position="1224"/>
        <end position="1240"/>
    </location>
</feature>
<feature type="compositionally biased region" description="Polar residues" evidence="9">
    <location>
        <begin position="1251"/>
        <end position="1263"/>
    </location>
</feature>
<feature type="compositionally biased region" description="Polar residues" evidence="9">
    <location>
        <begin position="1291"/>
        <end position="1302"/>
    </location>
</feature>
<feature type="compositionally biased region" description="Low complexity" evidence="9">
    <location>
        <begin position="1305"/>
        <end position="1322"/>
    </location>
</feature>
<feature type="active site" description="Proton donor/acceptor" evidence="4">
    <location>
        <position position="599"/>
    </location>
</feature>
<feature type="binding site" evidence="3">
    <location>
        <begin position="564"/>
        <end position="568"/>
    </location>
    <ligand>
        <name>acetyl-CoA</name>
        <dbReference type="ChEBI" id="CHEBI:57288"/>
    </ligand>
</feature>
<feature type="binding site" evidence="3">
    <location>
        <begin position="573"/>
        <end position="579"/>
    </location>
    <ligand>
        <name>acetyl-CoA</name>
        <dbReference type="ChEBI" id="CHEBI:57288"/>
    </ligand>
</feature>
<feature type="binding site" evidence="3">
    <location>
        <position position="603"/>
    </location>
    <ligand>
        <name>acetyl-CoA</name>
        <dbReference type="ChEBI" id="CHEBI:57288"/>
    </ligand>
</feature>
<feature type="modified residue" description="Phosphoserine" evidence="2">
    <location>
        <position position="355"/>
    </location>
</feature>
<feature type="modified residue" description="N6-acetyllysine; by autocatalysis" evidence="3">
    <location>
        <position position="523"/>
    </location>
</feature>
<feature type="modified residue" description="N6-acetyllysine" evidence="2">
    <location>
        <position position="746"/>
    </location>
</feature>
<feature type="modified residue" description="N6-acetyllysine" evidence="2">
    <location>
        <position position="750"/>
    </location>
</feature>
<feature type="modified residue" description="N6-acetyllysine" evidence="2">
    <location>
        <position position="752"/>
    </location>
</feature>
<feature type="modified residue" description="Phosphoserine" evidence="2">
    <location>
        <position position="756"/>
    </location>
</feature>
<feature type="cross-link" description="Glycyl lysine isopeptide (Lys-Gly) (interchain with G-Cter in SUMO2)" evidence="2">
    <location>
        <position position="381"/>
    </location>
</feature>
<sequence>MVKLANPLYTEWILEAIQKIKKQKQRPSEERICHAVSTSHGLDKKTVSEQLELSVQDGSVLKVTNKGLASYKDPDNPGRFSSVKPGTFPKSTKESRGSCNDLRNVDWNKLLRRAIEGLEEPNGSSLKNIEKYLRSQSDLTSTTNNPAFQQRLRLGAKRAVNNGRLLKDGPQYRVNYGSLDGKGAPQYPSAFPSSLPPVSLLPHEKDQPRADPIPICSFCLGTKESNREKKPEELLSCADCGSSGHPSCLKFCPELTTNVKALRWQCIECKTCSACRVQGRNADNMLFCDSCDRGFHMECCDPPLSRMPKGMWICQVCRPKKKGRKLLHEKAAQIKRRYAKPIGRPKNKLKQRLLSVTSDEGSMNAFTGRGSPDTEIKINIKQESADVNVIGNKDVVTEEDLDVFKQAQELSWEKIECESGVEDCGRYPSVIEFGKYEIQTWYSSPYPQEYARLPKLYLCEFCLKYMKSKNILLRHSKKCGWFHPPANEIYRRKDLSVFEVDGNMSKIYCQNLCLLAKLFLDHKTLYYDVEPFLFYVLTKNDEKGCHLVGYFSKEKLCQQKYNVSCIMIMPQHQRQGFGRFLIDFSYLLSRREGQAGSPEKPLSDLGRLSYLAYWKSVILEYLYHHHERHISIKAISRATGMCPHDIATTLQHLHMIDKRDGGFVIIRREKLILSHMEKLKTCSRANELDPDSLRWTPILISNAAVSEEEREAEKEAERLMEQASCWEKEEQEVLSTRANSRQSPAKVQSKNKYLHSPESRPVTGERGQLLELSKESSEEEEEEEEDEEEEDEEEEEEEEEDEEEEEEEEEEEEEEEEENIQSSPPRLTKPQSVAIKRKRPFVLKKKRGRKRRRINSSVTTETISETTEVLNEPFDNSDEERPMPQLEPTCEIEVEEDGRKPVLRKAFQHQPGKKRQTEEEEGKDNHCFKNADPCRNNMNDDSRNLKEGSKDNPEPLKCKQAWPKGTKRGLSKWRQNKERKTGFKLNLYTPPETPLEPDEQVTVEEQKETSEGKTSPTPISIEEEAKEAGEALLPQEENRRQETCAPVSPNTSPGEKPEDDLIKPEEEEEEEEEEEEEEGEEEEEEGGNVEKDPDGAKSQEKEEPEISPEKEDSARLDDHEEEEEEDEEPSHNEDHDADDEDDSHMESAEVEKEELPRESFKEVLENEEAFLDLNVQPSHSNPEVLMDCGVDLTASCNSEPKELAGDPEAVPESDEEPPPGEQAQKQDQKNSKEVDTEFKEGNPATMEIDSETVQAVQSLTQESSEQDDTFQDCAETQEACRSLQNYTRADQSPQIATTLDDCQQSDHSSPVSSVHSHPGQSVRSVNSPSVPALENSYAQISPDQSAISVPSLQNMETSPMMDVPSVSDHSQQVVDSGFSDLGSIESTTENYENPSSYDSTMGGSICGNGSSQNSCSYSNLTSSSLTQSSCAVTQQMSNISGSCSMLQQTSISSPPTCSVKSPQGCVVERPPSSSQQLAQCSMAANFTPPMQLAEIPETGNANIGLYERMGQSDFGAGHYPQPSATFSLAKLQQLTNTLIDHSLPYSHSAAVTSYANSASLSTPLSNTGLVQLSQSPHSVPGGPQAQATMTPPPNLTPPPMNLPPPLLQRNMAASNIGISHSQRLQTQIASKGHVSMRTKSASLSPAAATHQSQIYGRSQTVAMQGPARTLTMQRGMNMSVNLMPAPAYNVNSVNMNMNTLNAMNGYSMSQPMMNSGYHSNHGYMNQTPQYPMQMQMGMMGTQPYAQQPMQTPPHGNMMYTAPGHHGYMNTGMSKQSLNGSYMRR</sequence>
<accession>Q8WML3</accession>
<gene>
    <name type="primary">KAT6B</name>
    <name type="synonym">MYST4</name>
    <name type="ORF">QflA-12408</name>
</gene>
<comment type="function">
    <text evidence="2">Histone acetyltransferase which may be involved in both positive and negative regulation of transcription. Required for RUNX2-dependent transcriptional activation. May be involved in cerebral cortex development. Component of the MOZ/MORF complex which has a histone H3 acetyltransferase activity.</text>
</comment>
<comment type="catalytic activity">
    <reaction evidence="2">
        <text>L-lysyl-[protein] + acetyl-CoA = N(6)-acetyl-L-lysyl-[protein] + CoA + H(+)</text>
        <dbReference type="Rhea" id="RHEA:45948"/>
        <dbReference type="Rhea" id="RHEA-COMP:9752"/>
        <dbReference type="Rhea" id="RHEA-COMP:10731"/>
        <dbReference type="ChEBI" id="CHEBI:15378"/>
        <dbReference type="ChEBI" id="CHEBI:29969"/>
        <dbReference type="ChEBI" id="CHEBI:57287"/>
        <dbReference type="ChEBI" id="CHEBI:57288"/>
        <dbReference type="ChEBI" id="CHEBI:61930"/>
        <dbReference type="EC" id="2.3.1.48"/>
    </reaction>
</comment>
<comment type="subunit">
    <text evidence="2">Component of the MOZ/MORF complex composed at least of ING5, KAT6A, KAT6B, MEAF6 and one of BRPF1, BRD1/BRPF2 and BRPF3. Interacts with RUNX1 and RUNX2.</text>
</comment>
<comment type="subcellular location">
    <subcellularLocation>
        <location evidence="10">Nucleus</location>
    </subcellularLocation>
</comment>
<comment type="domain">
    <text evidence="1">The N-terminus is involved in transcriptional activation while the C-terminus is involved in transcriptional repression.</text>
</comment>
<comment type="PTM">
    <text evidence="4">Autoacetylation at Lys-523 is required for proper function.</text>
</comment>
<comment type="similarity">
    <text evidence="10">Belongs to the MYST (SAS/MOZ) family.</text>
</comment>
<proteinExistence type="evidence at transcript level"/>
<dbReference type="EC" id="2.3.1.48" evidence="2"/>
<dbReference type="EMBL" id="AB061870">
    <property type="protein sequence ID" value="BAB72094.1"/>
    <property type="molecule type" value="mRNA"/>
</dbReference>
<dbReference type="SMR" id="Q8WML3"/>
<dbReference type="STRING" id="9541.ENSMFAP00000018872"/>
<dbReference type="eggNOG" id="KOG2747">
    <property type="taxonomic scope" value="Eukaryota"/>
</dbReference>
<dbReference type="Proteomes" id="UP000233100">
    <property type="component" value="Unplaced"/>
</dbReference>
<dbReference type="GO" id="GO:0070776">
    <property type="term" value="C:MOZ/MORF histone acetyltransferase complex"/>
    <property type="evidence" value="ECO:0000250"/>
    <property type="project" value="UniProtKB"/>
</dbReference>
<dbReference type="GO" id="GO:0000786">
    <property type="term" value="C:nucleosome"/>
    <property type="evidence" value="ECO:0007669"/>
    <property type="project" value="InterPro"/>
</dbReference>
<dbReference type="GO" id="GO:0005634">
    <property type="term" value="C:nucleus"/>
    <property type="evidence" value="ECO:0007669"/>
    <property type="project" value="UniProtKB-SubCell"/>
</dbReference>
<dbReference type="GO" id="GO:0003682">
    <property type="term" value="F:chromatin binding"/>
    <property type="evidence" value="ECO:0007669"/>
    <property type="project" value="TreeGrafter"/>
</dbReference>
<dbReference type="GO" id="GO:0003677">
    <property type="term" value="F:DNA binding"/>
    <property type="evidence" value="ECO:0007669"/>
    <property type="project" value="InterPro"/>
</dbReference>
<dbReference type="GO" id="GO:0004402">
    <property type="term" value="F:histone acetyltransferase activity"/>
    <property type="evidence" value="ECO:0000250"/>
    <property type="project" value="UniProtKB"/>
</dbReference>
<dbReference type="GO" id="GO:0010484">
    <property type="term" value="F:histone H3 acetyltransferase activity"/>
    <property type="evidence" value="ECO:0007669"/>
    <property type="project" value="TreeGrafter"/>
</dbReference>
<dbReference type="GO" id="GO:0061733">
    <property type="term" value="F:protein-lysine-acetyltransferase activity"/>
    <property type="evidence" value="ECO:0000250"/>
    <property type="project" value="UniProtKB"/>
</dbReference>
<dbReference type="GO" id="GO:0003713">
    <property type="term" value="F:transcription coactivator activity"/>
    <property type="evidence" value="ECO:0000250"/>
    <property type="project" value="UniProtKB"/>
</dbReference>
<dbReference type="GO" id="GO:0008270">
    <property type="term" value="F:zinc ion binding"/>
    <property type="evidence" value="ECO:0007669"/>
    <property type="project" value="UniProtKB-KW"/>
</dbReference>
<dbReference type="GO" id="GO:0045892">
    <property type="term" value="P:negative regulation of DNA-templated transcription"/>
    <property type="evidence" value="ECO:0000250"/>
    <property type="project" value="UniProtKB"/>
</dbReference>
<dbReference type="GO" id="GO:0006334">
    <property type="term" value="P:nucleosome assembly"/>
    <property type="evidence" value="ECO:0007669"/>
    <property type="project" value="InterPro"/>
</dbReference>
<dbReference type="GO" id="GO:0045893">
    <property type="term" value="P:positive regulation of DNA-templated transcription"/>
    <property type="evidence" value="ECO:0000250"/>
    <property type="project" value="UniProtKB"/>
</dbReference>
<dbReference type="GO" id="GO:0006357">
    <property type="term" value="P:regulation of transcription by RNA polymerase II"/>
    <property type="evidence" value="ECO:0007669"/>
    <property type="project" value="TreeGrafter"/>
</dbReference>
<dbReference type="CDD" id="cd15527">
    <property type="entry name" value="PHD2_KAT6A_6B"/>
    <property type="match status" value="1"/>
</dbReference>
<dbReference type="FunFam" id="1.10.10.10:FF:000123">
    <property type="entry name" value="Histone acetyltransferase"/>
    <property type="match status" value="1"/>
</dbReference>
<dbReference type="FunFam" id="1.10.10.10:FF:000132">
    <property type="entry name" value="Histone acetyltransferase"/>
    <property type="match status" value="1"/>
</dbReference>
<dbReference type="FunFam" id="3.30.40.10:FF:000035">
    <property type="entry name" value="Histone acetyltransferase"/>
    <property type="match status" value="1"/>
</dbReference>
<dbReference type="FunFam" id="3.30.60.60:FF:000002">
    <property type="entry name" value="Histone acetyltransferase"/>
    <property type="match status" value="1"/>
</dbReference>
<dbReference type="FunFam" id="3.40.630.30:FF:000001">
    <property type="entry name" value="Histone acetyltransferase"/>
    <property type="match status" value="1"/>
</dbReference>
<dbReference type="Gene3D" id="3.40.630.30">
    <property type="match status" value="1"/>
</dbReference>
<dbReference type="Gene3D" id="3.30.60.60">
    <property type="entry name" value="N-acetyl transferase-like"/>
    <property type="match status" value="1"/>
</dbReference>
<dbReference type="Gene3D" id="1.10.10.10">
    <property type="entry name" value="Winged helix-like DNA-binding domain superfamily/Winged helix DNA-binding domain"/>
    <property type="match status" value="2"/>
</dbReference>
<dbReference type="Gene3D" id="3.30.40.10">
    <property type="entry name" value="Zinc/RING finger domain, C3HC4 (zinc finger)"/>
    <property type="match status" value="1"/>
</dbReference>
<dbReference type="InterPro" id="IPR016181">
    <property type="entry name" value="Acyl_CoA_acyltransferase"/>
</dbReference>
<dbReference type="InterPro" id="IPR016024">
    <property type="entry name" value="ARM-type_fold"/>
</dbReference>
<dbReference type="InterPro" id="IPR002717">
    <property type="entry name" value="HAT_MYST-type"/>
</dbReference>
<dbReference type="InterPro" id="IPR005818">
    <property type="entry name" value="Histone_H1/H5_H15"/>
</dbReference>
<dbReference type="InterPro" id="IPR050603">
    <property type="entry name" value="MYST_HAT"/>
</dbReference>
<dbReference type="InterPro" id="IPR048589">
    <property type="entry name" value="SAMD1-like_WH"/>
</dbReference>
<dbReference type="InterPro" id="IPR036388">
    <property type="entry name" value="WH-like_DNA-bd_sf"/>
</dbReference>
<dbReference type="InterPro" id="IPR036390">
    <property type="entry name" value="WH_DNA-bd_sf"/>
</dbReference>
<dbReference type="InterPro" id="IPR040706">
    <property type="entry name" value="Zf-MYST"/>
</dbReference>
<dbReference type="InterPro" id="IPR011011">
    <property type="entry name" value="Znf_FYVE_PHD"/>
</dbReference>
<dbReference type="InterPro" id="IPR001965">
    <property type="entry name" value="Znf_PHD"/>
</dbReference>
<dbReference type="InterPro" id="IPR019787">
    <property type="entry name" value="Znf_PHD-finger"/>
</dbReference>
<dbReference type="InterPro" id="IPR013083">
    <property type="entry name" value="Znf_RING/FYVE/PHD"/>
</dbReference>
<dbReference type="PANTHER" id="PTHR10615">
    <property type="entry name" value="HISTONE ACETYLTRANSFERASE"/>
    <property type="match status" value="1"/>
</dbReference>
<dbReference type="PANTHER" id="PTHR10615:SF73">
    <property type="entry name" value="HISTONE ACETYLTRANSFERASE KAT6B"/>
    <property type="match status" value="1"/>
</dbReference>
<dbReference type="Pfam" id="PF01853">
    <property type="entry name" value="MOZ_SAS"/>
    <property type="match status" value="1"/>
</dbReference>
<dbReference type="Pfam" id="PF00628">
    <property type="entry name" value="PHD"/>
    <property type="match status" value="1"/>
</dbReference>
<dbReference type="Pfam" id="PF21524">
    <property type="entry name" value="SAMD1_WH"/>
    <property type="match status" value="1"/>
</dbReference>
<dbReference type="Pfam" id="PF17772">
    <property type="entry name" value="zf-MYST"/>
    <property type="match status" value="1"/>
</dbReference>
<dbReference type="SMART" id="SM00526">
    <property type="entry name" value="H15"/>
    <property type="match status" value="1"/>
</dbReference>
<dbReference type="SMART" id="SM00249">
    <property type="entry name" value="PHD"/>
    <property type="match status" value="2"/>
</dbReference>
<dbReference type="SUPFAM" id="SSF55729">
    <property type="entry name" value="Acyl-CoA N-acyltransferases (Nat)"/>
    <property type="match status" value="1"/>
</dbReference>
<dbReference type="SUPFAM" id="SSF48371">
    <property type="entry name" value="ARM repeat"/>
    <property type="match status" value="1"/>
</dbReference>
<dbReference type="SUPFAM" id="SSF57903">
    <property type="entry name" value="FYVE/PHD zinc finger"/>
    <property type="match status" value="1"/>
</dbReference>
<dbReference type="SUPFAM" id="SSF46785">
    <property type="entry name" value="Winged helix' DNA-binding domain"/>
    <property type="match status" value="1"/>
</dbReference>
<dbReference type="PROSITE" id="PS51504">
    <property type="entry name" value="H15"/>
    <property type="match status" value="1"/>
</dbReference>
<dbReference type="PROSITE" id="PS51726">
    <property type="entry name" value="MYST_HAT"/>
    <property type="match status" value="1"/>
</dbReference>
<dbReference type="PROSITE" id="PS52014">
    <property type="entry name" value="SAMD1_WH"/>
    <property type="match status" value="1"/>
</dbReference>
<dbReference type="PROSITE" id="PS01359">
    <property type="entry name" value="ZF_PHD_1"/>
    <property type="match status" value="1"/>
</dbReference>
<dbReference type="PROSITE" id="PS50016">
    <property type="entry name" value="ZF_PHD_2"/>
    <property type="match status" value="2"/>
</dbReference>
<reference key="1">
    <citation type="submission" date="2001-05" db="EMBL/GenBank/DDBJ databases">
        <title>Isolation of full-length cDNA clones from macaque brain cDNA libraries.</title>
        <authorList>
            <person name="Osada N."/>
            <person name="Hida M."/>
            <person name="Kusuda J."/>
            <person name="Tanuma R."/>
            <person name="Hirata M."/>
            <person name="Terao K."/>
            <person name="Hirai M."/>
            <person name="Sugano S."/>
            <person name="Hashimoto K."/>
        </authorList>
    </citation>
    <scope>NUCLEOTIDE SEQUENCE [LARGE SCALE MRNA]</scope>
    <source>
        <tissue>Frontal cortex</tissue>
    </source>
</reference>
<protein>
    <recommendedName>
        <fullName>Histone acetyltransferase KAT6B</fullName>
        <ecNumber evidence="2">2.3.1.48</ecNumber>
    </recommendedName>
    <alternativeName>
        <fullName>MOZ, YBF2/SAS3, SAS2 and TIP60 protein 4</fullName>
        <shortName>MYST-4</shortName>
    </alternativeName>
</protein>
<keyword id="KW-0007">Acetylation</keyword>
<keyword id="KW-0010">Activator</keyword>
<keyword id="KW-0012">Acyltransferase</keyword>
<keyword id="KW-0156">Chromatin regulator</keyword>
<keyword id="KW-1017">Isopeptide bond</keyword>
<keyword id="KW-0479">Metal-binding</keyword>
<keyword id="KW-0539">Nucleus</keyword>
<keyword id="KW-0597">Phosphoprotein</keyword>
<keyword id="KW-1185">Reference proteome</keyword>
<keyword id="KW-0677">Repeat</keyword>
<keyword id="KW-0678">Repressor</keyword>
<keyword id="KW-0804">Transcription</keyword>
<keyword id="KW-0805">Transcription regulation</keyword>
<keyword id="KW-0808">Transferase</keyword>
<keyword id="KW-0832">Ubl conjugation</keyword>
<keyword id="KW-0862">Zinc</keyword>
<keyword id="KW-0863">Zinc-finger</keyword>
<name>KAT6B_MACFA</name>